<dbReference type="EMBL" id="AE014134">
    <property type="protein sequence ID" value="AAF53066.2"/>
    <property type="molecule type" value="Genomic_DNA"/>
</dbReference>
<dbReference type="EMBL" id="AE014134">
    <property type="protein sequence ID" value="AAF53067.2"/>
    <property type="molecule type" value="Genomic_DNA"/>
</dbReference>
<dbReference type="EMBL" id="BT004479">
    <property type="protein sequence ID" value="AAO42643.1"/>
    <property type="molecule type" value="mRNA"/>
</dbReference>
<dbReference type="EMBL" id="AY113369">
    <property type="protein sequence ID" value="AAM29374.1"/>
    <property type="status" value="ALT_INIT"/>
    <property type="molecule type" value="mRNA"/>
</dbReference>
<dbReference type="RefSeq" id="NP_609486.2">
    <property type="nucleotide sequence ID" value="NM_135642.3"/>
</dbReference>
<dbReference type="RefSeq" id="NP_723654.1">
    <property type="nucleotide sequence ID" value="NM_164957.2"/>
</dbReference>
<dbReference type="PDB" id="2VXG">
    <property type="method" value="X-ray"/>
    <property type="resolution" value="1.90 A"/>
    <property type="chains" value="A/B=1220-1354"/>
</dbReference>
<dbReference type="PDBsum" id="2VXG"/>
<dbReference type="SMR" id="Q9VKK1"/>
<dbReference type="BioGRID" id="60603">
    <property type="interactions" value="16"/>
</dbReference>
<dbReference type="FunCoup" id="Q9VKK1">
    <property type="interactions" value="1598"/>
</dbReference>
<dbReference type="IntAct" id="Q9VKK1">
    <property type="interactions" value="8"/>
</dbReference>
<dbReference type="MINT" id="Q9VKK1"/>
<dbReference type="STRING" id="7227.FBpp0079819"/>
<dbReference type="GlyGen" id="Q9VKK1">
    <property type="glycosylation" value="2 sites, 1 O-linked glycan (1 site)"/>
</dbReference>
<dbReference type="iPTMnet" id="Q9VKK1"/>
<dbReference type="PaxDb" id="7227-FBpp0079818"/>
<dbReference type="EnsemblMetazoa" id="FBtr0080231">
    <property type="protein sequence ID" value="FBpp0079818"/>
    <property type="gene ID" value="FBgn0283682"/>
</dbReference>
<dbReference type="EnsemblMetazoa" id="FBtr0080232">
    <property type="protein sequence ID" value="FBpp0079819"/>
    <property type="gene ID" value="FBgn0283682"/>
</dbReference>
<dbReference type="GeneID" id="34541"/>
<dbReference type="KEGG" id="dme:Dmel_CG6181"/>
<dbReference type="UCSC" id="CG6181-RA">
    <property type="organism name" value="d. melanogaster"/>
</dbReference>
<dbReference type="AGR" id="FB:FBgn0283682"/>
<dbReference type="CTD" id="34541"/>
<dbReference type="FlyBase" id="FBgn0283682">
    <property type="gene designation" value="Ge-1"/>
</dbReference>
<dbReference type="VEuPathDB" id="VectorBase:FBgn0283682"/>
<dbReference type="eggNOG" id="KOG1916">
    <property type="taxonomic scope" value="Eukaryota"/>
</dbReference>
<dbReference type="GeneTree" id="ENSGT00510000047791"/>
<dbReference type="HOGENOM" id="CLU_005166_0_0_1"/>
<dbReference type="InParanoid" id="Q9VKK1"/>
<dbReference type="OMA" id="TREHMGT"/>
<dbReference type="OrthoDB" id="21128at2759"/>
<dbReference type="PhylomeDB" id="Q9VKK1"/>
<dbReference type="Reactome" id="R-DME-430039">
    <property type="pathway name" value="mRNA decay by 5' to 3' exoribonuclease"/>
</dbReference>
<dbReference type="SignaLink" id="Q9VKK1"/>
<dbReference type="EvolutionaryTrace" id="Q9VKK1"/>
<dbReference type="GenomeRNAi" id="34541"/>
<dbReference type="PRO" id="PR:Q9VKK1"/>
<dbReference type="Proteomes" id="UP000000803">
    <property type="component" value="Chromosome 2L"/>
</dbReference>
<dbReference type="Bgee" id="FBgn0283682">
    <property type="expression patterns" value="Expressed in wing disc and 144 other cell types or tissues"/>
</dbReference>
<dbReference type="GO" id="GO:0000932">
    <property type="term" value="C:P-body"/>
    <property type="evidence" value="ECO:0000314"/>
    <property type="project" value="UniProtKB"/>
</dbReference>
<dbReference type="GO" id="GO:0045495">
    <property type="term" value="C:pole plasm"/>
    <property type="evidence" value="ECO:0000314"/>
    <property type="project" value="FlyBase"/>
</dbReference>
<dbReference type="GO" id="GO:0000290">
    <property type="term" value="P:deadenylation-dependent decapping of nuclear-transcribed mRNA"/>
    <property type="evidence" value="ECO:0000316"/>
    <property type="project" value="FlyBase"/>
</dbReference>
<dbReference type="GO" id="GO:0031087">
    <property type="term" value="P:deadenylation-independent decapping of nuclear-transcribed mRNA"/>
    <property type="evidence" value="ECO:0000318"/>
    <property type="project" value="GO_Central"/>
</dbReference>
<dbReference type="GO" id="GO:0035195">
    <property type="term" value="P:miRNA-mediated post-transcriptional gene silencing"/>
    <property type="evidence" value="ECO:0000316"/>
    <property type="project" value="FlyBase"/>
</dbReference>
<dbReference type="GO" id="GO:0006402">
    <property type="term" value="P:mRNA catabolic process"/>
    <property type="evidence" value="ECO:0000315"/>
    <property type="project" value="UniProtKB"/>
</dbReference>
<dbReference type="GO" id="GO:0033962">
    <property type="term" value="P:P-body assembly"/>
    <property type="evidence" value="ECO:0000315"/>
    <property type="project" value="FlyBase"/>
</dbReference>
<dbReference type="GO" id="GO:0045451">
    <property type="term" value="P:pole plasm oskar mRNA localization"/>
    <property type="evidence" value="ECO:0000315"/>
    <property type="project" value="FlyBase"/>
</dbReference>
<dbReference type="FunFam" id="1.10.220.100:FF:000001">
    <property type="entry name" value="Enhancer of mRNA-decapping protein 4"/>
    <property type="match status" value="1"/>
</dbReference>
<dbReference type="FunFam" id="2.130.10.10:FF:001414">
    <property type="entry name" value="Enhancer of mRNA-decapping protein 4 homolog"/>
    <property type="match status" value="1"/>
</dbReference>
<dbReference type="Gene3D" id="6.10.140.270">
    <property type="match status" value="1"/>
</dbReference>
<dbReference type="Gene3D" id="1.10.220.100">
    <property type="entry name" value="conserved c-terminal region of ge- 1"/>
    <property type="match status" value="1"/>
</dbReference>
<dbReference type="Gene3D" id="2.130.10.10">
    <property type="entry name" value="YVTN repeat-like/Quinoprotein amine dehydrogenase"/>
    <property type="match status" value="1"/>
</dbReference>
<dbReference type="InterPro" id="IPR045152">
    <property type="entry name" value="EDC4-like"/>
</dbReference>
<dbReference type="InterPro" id="IPR049404">
    <property type="entry name" value="EDC4_C"/>
</dbReference>
<dbReference type="InterPro" id="IPR044938">
    <property type="entry name" value="EDC4_C_sf"/>
</dbReference>
<dbReference type="InterPro" id="IPR032401">
    <property type="entry name" value="EDC4_WD40"/>
</dbReference>
<dbReference type="InterPro" id="IPR015943">
    <property type="entry name" value="WD40/YVTN_repeat-like_dom_sf"/>
</dbReference>
<dbReference type="InterPro" id="IPR036322">
    <property type="entry name" value="WD40_repeat_dom_sf"/>
</dbReference>
<dbReference type="InterPro" id="IPR001680">
    <property type="entry name" value="WD40_rpt"/>
</dbReference>
<dbReference type="PANTHER" id="PTHR15598">
    <property type="entry name" value="ENHANCER OF MRNA-DECAPPING PROTEIN 4"/>
    <property type="match status" value="1"/>
</dbReference>
<dbReference type="PANTHER" id="PTHR15598:SF5">
    <property type="entry name" value="ENHANCER OF MRNA-DECAPPING PROTEIN 4"/>
    <property type="match status" value="1"/>
</dbReference>
<dbReference type="Pfam" id="PF21289">
    <property type="entry name" value="EDC4_C"/>
    <property type="match status" value="1"/>
</dbReference>
<dbReference type="Pfam" id="PF16529">
    <property type="entry name" value="Ge1_WD40"/>
    <property type="match status" value="1"/>
</dbReference>
<dbReference type="SMART" id="SM00320">
    <property type="entry name" value="WD40"/>
    <property type="match status" value="2"/>
</dbReference>
<dbReference type="SUPFAM" id="SSF50978">
    <property type="entry name" value="WD40 repeat-like"/>
    <property type="match status" value="1"/>
</dbReference>
<dbReference type="PROSITE" id="PS00678">
    <property type="entry name" value="WD_REPEATS_1"/>
    <property type="match status" value="1"/>
</dbReference>
<accession>Q9VKK1</accession>
<accession>Q8MZ42</accession>
<protein>
    <recommendedName>
        <fullName>Enhancer of mRNA-decapping protein 4 homolog</fullName>
    </recommendedName>
</protein>
<evidence type="ECO:0000255" key="1"/>
<evidence type="ECO:0000256" key="2">
    <source>
        <dbReference type="SAM" id="MobiDB-lite"/>
    </source>
</evidence>
<evidence type="ECO:0000269" key="3">
    <source>
    </source>
</evidence>
<evidence type="ECO:0000269" key="4">
    <source>
    </source>
</evidence>
<evidence type="ECO:0000269" key="5">
    <source>
    </source>
</evidence>
<evidence type="ECO:0000269" key="6">
    <source>
    </source>
</evidence>
<evidence type="ECO:0000269" key="7">
    <source>
    </source>
</evidence>
<evidence type="ECO:0000305" key="8"/>
<evidence type="ECO:0007829" key="9">
    <source>
        <dbReference type="PDB" id="2VXG"/>
    </source>
</evidence>
<comment type="function">
    <text evidence="4">In the process of mRNA degradation, seems to play a role in mRNA decapping. Required for silencing a subset of endogenous miRNA targets.</text>
</comment>
<comment type="subunit">
    <text evidence="6 7 8">Homodimer (Probable). Interacts with Dcp1 and Dcp2 (PubMed:18755833). Interacts with Gyf (PubMed:31114929).</text>
</comment>
<comment type="subcellular location">
    <subcellularLocation>
        <location evidence="4 6">Cytoplasm</location>
        <location evidence="4 6">P-body</location>
    </subcellularLocation>
</comment>
<comment type="similarity">
    <text evidence="8">Belongs to the WD repeat EDC4 family.</text>
</comment>
<comment type="sequence caution" evidence="8">
    <conflict type="erroneous initiation">
        <sequence resource="EMBL-CDS" id="AAM29374"/>
    </conflict>
</comment>
<reference key="1">
    <citation type="journal article" date="2000" name="Science">
        <title>The genome sequence of Drosophila melanogaster.</title>
        <authorList>
            <person name="Adams M.D."/>
            <person name="Celniker S.E."/>
            <person name="Holt R.A."/>
            <person name="Evans C.A."/>
            <person name="Gocayne J.D."/>
            <person name="Amanatides P.G."/>
            <person name="Scherer S.E."/>
            <person name="Li P.W."/>
            <person name="Hoskins R.A."/>
            <person name="Galle R.F."/>
            <person name="George R.A."/>
            <person name="Lewis S.E."/>
            <person name="Richards S."/>
            <person name="Ashburner M."/>
            <person name="Henderson S.N."/>
            <person name="Sutton G.G."/>
            <person name="Wortman J.R."/>
            <person name="Yandell M.D."/>
            <person name="Zhang Q."/>
            <person name="Chen L.X."/>
            <person name="Brandon R.C."/>
            <person name="Rogers Y.-H.C."/>
            <person name="Blazej R.G."/>
            <person name="Champe M."/>
            <person name="Pfeiffer B.D."/>
            <person name="Wan K.H."/>
            <person name="Doyle C."/>
            <person name="Baxter E.G."/>
            <person name="Helt G."/>
            <person name="Nelson C.R."/>
            <person name="Miklos G.L.G."/>
            <person name="Abril J.F."/>
            <person name="Agbayani A."/>
            <person name="An H.-J."/>
            <person name="Andrews-Pfannkoch C."/>
            <person name="Baldwin D."/>
            <person name="Ballew R.M."/>
            <person name="Basu A."/>
            <person name="Baxendale J."/>
            <person name="Bayraktaroglu L."/>
            <person name="Beasley E.M."/>
            <person name="Beeson K.Y."/>
            <person name="Benos P.V."/>
            <person name="Berman B.P."/>
            <person name="Bhandari D."/>
            <person name="Bolshakov S."/>
            <person name="Borkova D."/>
            <person name="Botchan M.R."/>
            <person name="Bouck J."/>
            <person name="Brokstein P."/>
            <person name="Brottier P."/>
            <person name="Burtis K.C."/>
            <person name="Busam D.A."/>
            <person name="Butler H."/>
            <person name="Cadieu E."/>
            <person name="Center A."/>
            <person name="Chandra I."/>
            <person name="Cherry J.M."/>
            <person name="Cawley S."/>
            <person name="Dahlke C."/>
            <person name="Davenport L.B."/>
            <person name="Davies P."/>
            <person name="de Pablos B."/>
            <person name="Delcher A."/>
            <person name="Deng Z."/>
            <person name="Mays A.D."/>
            <person name="Dew I."/>
            <person name="Dietz S.M."/>
            <person name="Dodson K."/>
            <person name="Doup L.E."/>
            <person name="Downes M."/>
            <person name="Dugan-Rocha S."/>
            <person name="Dunkov B.C."/>
            <person name="Dunn P."/>
            <person name="Durbin K.J."/>
            <person name="Evangelista C.C."/>
            <person name="Ferraz C."/>
            <person name="Ferriera S."/>
            <person name="Fleischmann W."/>
            <person name="Fosler C."/>
            <person name="Gabrielian A.E."/>
            <person name="Garg N.S."/>
            <person name="Gelbart W.M."/>
            <person name="Glasser K."/>
            <person name="Glodek A."/>
            <person name="Gong F."/>
            <person name="Gorrell J.H."/>
            <person name="Gu Z."/>
            <person name="Guan P."/>
            <person name="Harris M."/>
            <person name="Harris N.L."/>
            <person name="Harvey D.A."/>
            <person name="Heiman T.J."/>
            <person name="Hernandez J.R."/>
            <person name="Houck J."/>
            <person name="Hostin D."/>
            <person name="Houston K.A."/>
            <person name="Howland T.J."/>
            <person name="Wei M.-H."/>
            <person name="Ibegwam C."/>
            <person name="Jalali M."/>
            <person name="Kalush F."/>
            <person name="Karpen G.H."/>
            <person name="Ke Z."/>
            <person name="Kennison J.A."/>
            <person name="Ketchum K.A."/>
            <person name="Kimmel B.E."/>
            <person name="Kodira C.D."/>
            <person name="Kraft C.L."/>
            <person name="Kravitz S."/>
            <person name="Kulp D."/>
            <person name="Lai Z."/>
            <person name="Lasko P."/>
            <person name="Lei Y."/>
            <person name="Levitsky A.A."/>
            <person name="Li J.H."/>
            <person name="Li Z."/>
            <person name="Liang Y."/>
            <person name="Lin X."/>
            <person name="Liu X."/>
            <person name="Mattei B."/>
            <person name="McIntosh T.C."/>
            <person name="McLeod M.P."/>
            <person name="McPherson D."/>
            <person name="Merkulov G."/>
            <person name="Milshina N.V."/>
            <person name="Mobarry C."/>
            <person name="Morris J."/>
            <person name="Moshrefi A."/>
            <person name="Mount S.M."/>
            <person name="Moy M."/>
            <person name="Murphy B."/>
            <person name="Murphy L."/>
            <person name="Muzny D.M."/>
            <person name="Nelson D.L."/>
            <person name="Nelson D.R."/>
            <person name="Nelson K.A."/>
            <person name="Nixon K."/>
            <person name="Nusskern D.R."/>
            <person name="Pacleb J.M."/>
            <person name="Palazzolo M."/>
            <person name="Pittman G.S."/>
            <person name="Pan S."/>
            <person name="Pollard J."/>
            <person name="Puri V."/>
            <person name="Reese M.G."/>
            <person name="Reinert K."/>
            <person name="Remington K."/>
            <person name="Saunders R.D.C."/>
            <person name="Scheeler F."/>
            <person name="Shen H."/>
            <person name="Shue B.C."/>
            <person name="Siden-Kiamos I."/>
            <person name="Simpson M."/>
            <person name="Skupski M.P."/>
            <person name="Smith T.J."/>
            <person name="Spier E."/>
            <person name="Spradling A.C."/>
            <person name="Stapleton M."/>
            <person name="Strong R."/>
            <person name="Sun E."/>
            <person name="Svirskas R."/>
            <person name="Tector C."/>
            <person name="Turner R."/>
            <person name="Venter E."/>
            <person name="Wang A.H."/>
            <person name="Wang X."/>
            <person name="Wang Z.-Y."/>
            <person name="Wassarman D.A."/>
            <person name="Weinstock G.M."/>
            <person name="Weissenbach J."/>
            <person name="Williams S.M."/>
            <person name="Woodage T."/>
            <person name="Worley K.C."/>
            <person name="Wu D."/>
            <person name="Yang S."/>
            <person name="Yao Q.A."/>
            <person name="Ye J."/>
            <person name="Yeh R.-F."/>
            <person name="Zaveri J.S."/>
            <person name="Zhan M."/>
            <person name="Zhang G."/>
            <person name="Zhao Q."/>
            <person name="Zheng L."/>
            <person name="Zheng X.H."/>
            <person name="Zhong F.N."/>
            <person name="Zhong W."/>
            <person name="Zhou X."/>
            <person name="Zhu S.C."/>
            <person name="Zhu X."/>
            <person name="Smith H.O."/>
            <person name="Gibbs R.A."/>
            <person name="Myers E.W."/>
            <person name="Rubin G.M."/>
            <person name="Venter J.C."/>
        </authorList>
    </citation>
    <scope>NUCLEOTIDE SEQUENCE [LARGE SCALE GENOMIC DNA]</scope>
    <source>
        <strain>Berkeley</strain>
    </source>
</reference>
<reference key="2">
    <citation type="journal article" date="2002" name="Genome Biol.">
        <title>Annotation of the Drosophila melanogaster euchromatic genome: a systematic review.</title>
        <authorList>
            <person name="Misra S."/>
            <person name="Crosby M.A."/>
            <person name="Mungall C.J."/>
            <person name="Matthews B.B."/>
            <person name="Campbell K.S."/>
            <person name="Hradecky P."/>
            <person name="Huang Y."/>
            <person name="Kaminker J.S."/>
            <person name="Millburn G.H."/>
            <person name="Prochnik S.E."/>
            <person name="Smith C.D."/>
            <person name="Tupy J.L."/>
            <person name="Whitfield E.J."/>
            <person name="Bayraktaroglu L."/>
            <person name="Berman B.P."/>
            <person name="Bettencourt B.R."/>
            <person name="Celniker S.E."/>
            <person name="de Grey A.D.N.J."/>
            <person name="Drysdale R.A."/>
            <person name="Harris N.L."/>
            <person name="Richter J."/>
            <person name="Russo S."/>
            <person name="Schroeder A.J."/>
            <person name="Shu S.Q."/>
            <person name="Stapleton M."/>
            <person name="Yamada C."/>
            <person name="Ashburner M."/>
            <person name="Gelbart W.M."/>
            <person name="Rubin G.M."/>
            <person name="Lewis S.E."/>
        </authorList>
    </citation>
    <scope>GENOME REANNOTATION</scope>
    <source>
        <strain>Berkeley</strain>
    </source>
</reference>
<reference key="3">
    <citation type="submission" date="2003-02" db="EMBL/GenBank/DDBJ databases">
        <authorList>
            <person name="Stapleton M."/>
            <person name="Brokstein P."/>
            <person name="Hong L."/>
            <person name="Agbayani A."/>
            <person name="Carlson J.W."/>
            <person name="Champe M."/>
            <person name="Chavez C."/>
            <person name="Dorsett V."/>
            <person name="Dresnek D."/>
            <person name="Farfan D."/>
            <person name="Frise E."/>
            <person name="George R.A."/>
            <person name="Gonzalez M."/>
            <person name="Guarin H."/>
            <person name="Kronmiller B."/>
            <person name="Li P.W."/>
            <person name="Liao G."/>
            <person name="Miranda A."/>
            <person name="Mungall C.J."/>
            <person name="Nunoo J."/>
            <person name="Pacleb J.M."/>
            <person name="Paragas V."/>
            <person name="Park S."/>
            <person name="Patel S."/>
            <person name="Phouanenavong S."/>
            <person name="Wan K.H."/>
            <person name="Yu C."/>
            <person name="Lewis S.E."/>
            <person name="Rubin G.M."/>
            <person name="Celniker S.E."/>
        </authorList>
    </citation>
    <scope>NUCLEOTIDE SEQUENCE [LARGE SCALE MRNA]</scope>
    <source>
        <strain>Berkeley</strain>
        <tissue>Embryo</tissue>
    </source>
</reference>
<reference key="4">
    <citation type="journal article" date="2002" name="Genome Biol.">
        <title>A Drosophila full-length cDNA resource.</title>
        <authorList>
            <person name="Stapleton M."/>
            <person name="Carlson J.W."/>
            <person name="Brokstein P."/>
            <person name="Yu C."/>
            <person name="Champe M."/>
            <person name="George R.A."/>
            <person name="Guarin H."/>
            <person name="Kronmiller B."/>
            <person name="Pacleb J.M."/>
            <person name="Park S."/>
            <person name="Wan K.H."/>
            <person name="Rubin G.M."/>
            <person name="Celniker S.E."/>
        </authorList>
    </citation>
    <scope>NUCLEOTIDE SEQUENCE [LARGE SCALE MRNA] OF 377-1354</scope>
    <source>
        <strain>Berkeley</strain>
        <tissue>Embryo</tissue>
    </source>
</reference>
<reference key="5">
    <citation type="journal article" date="2007" name="Genes Dev.">
        <title>Target-specific requirements for enhancers of decapping in miRNA-mediated gene silencing.</title>
        <authorList>
            <person name="Eulalio A."/>
            <person name="Rehwinkel J."/>
            <person name="Stricker M."/>
            <person name="Huntzinger E."/>
            <person name="Yang S.-F."/>
            <person name="Doerks T."/>
            <person name="Dorner S."/>
            <person name="Bork P."/>
            <person name="Boutros M."/>
            <person name="Izaurralde E."/>
        </authorList>
    </citation>
    <scope>FUNCTION</scope>
    <scope>SUBCELLULAR LOCATION</scope>
</reference>
<reference key="6">
    <citation type="journal article" date="2007" name="Mol. Biosyst.">
        <title>An integrated chemical, mass spectrometric and computational strategy for (quantitative) phosphoproteomics: application to Drosophila melanogaster Kc167 cells.</title>
        <authorList>
            <person name="Bodenmiller B."/>
            <person name="Mueller L.N."/>
            <person name="Pedrioli P.G.A."/>
            <person name="Pflieger D."/>
            <person name="Juenger M.A."/>
            <person name="Eng J.K."/>
            <person name="Aebersold R."/>
            <person name="Tao W.A."/>
        </authorList>
    </citation>
    <scope>PHOSPHORYLATION [LARGE SCALE ANALYSIS] AT SER-576 AND THR-581</scope>
    <scope>IDENTIFICATION BY MASS SPECTROMETRY</scope>
</reference>
<reference key="7">
    <citation type="journal article" date="2008" name="J. Proteome Res.">
        <title>Phosphoproteome analysis of Drosophila melanogaster embryos.</title>
        <authorList>
            <person name="Zhai B."/>
            <person name="Villen J."/>
            <person name="Beausoleil S.A."/>
            <person name="Mintseris J."/>
            <person name="Gygi S.P."/>
        </authorList>
    </citation>
    <scope>PHOSPHORYLATION [LARGE SCALE ANALYSIS] AT SER-32; SER-561; THR-563; SER-576; SER-759; SER-762; SER-763; SER-1207; THR-1211; THR-1317 AND TYR-1320</scope>
    <scope>IDENTIFICATION BY MASS SPECTROMETRY</scope>
    <source>
        <tissue>Embryo</tissue>
    </source>
</reference>
<reference key="8">
    <citation type="journal article" date="2019" name="Nucleic Acids Res.">
        <title>Direct role for the Drosophila GIGYF protein in 4EHP-mediated mRNA repression.</title>
        <authorList>
            <person name="Ruscica V."/>
            <person name="Bawankar P."/>
            <person name="Peter D."/>
            <person name="Helms S."/>
            <person name="Igreja C."/>
            <person name="Izaurralde E."/>
        </authorList>
    </citation>
    <scope>INTERACTION WITH GYF</scope>
</reference>
<reference key="9">
    <citation type="journal article" date="2008" name="RNA">
        <title>The C-terminal region of Ge-1 presents conserved structural features required for P-body localization.</title>
        <authorList>
            <person name="Jinek M."/>
            <person name="Eulalio A."/>
            <person name="Lingel A."/>
            <person name="Helms S."/>
            <person name="Conti E."/>
            <person name="Izaurralde E."/>
        </authorList>
    </citation>
    <scope>X-RAY CRYSTALLOGRAPHY (1.9 ANGSTROMS) OF 1220-1354</scope>
    <scope>SUBUNIT</scope>
    <scope>SUBCELLULAR LOCATION</scope>
</reference>
<proteinExistence type="evidence at protein level"/>
<gene>
    <name type="primary">Ge-1</name>
    <name type="ORF">CG6181</name>
</gene>
<sequence>MLIALFALAHLPIFRKTPLSASSSPPPSVHRSPRCGKASTAYHPPPADACISITASAIDAASGMSNSAEQDKPIAANGNAAEPQEIEVIHFQAQEKQCCRVIRSNKTKVLTSGGVHTRGSSKVKLKNIVDYKWERKYYYPGHLVAVHRDGKHLAYAINVNNKATGMEGMVRVCNIATSMRALIKGMSGEVLDLQFAHTDCERILAVIDVSSLFVYKVDQIEGNLLCNLVLKVEDPIANYVPEYDMVSWCPYVCSSSATVPINDDDDENQLLIWSRSSQFQCFQVKMIVSEHGRGKIQPAALESGYLKIEEDSLITCAALSPDGTTVAAACADGLVRFYQIYLFDVRNHRCLHEWKPHDGKKVCSLFFLDNINKPVEESYWQHVITTSDANTEIKLWNCSLWKCLQTINVVASPSSLQPRNFIAGIDRSANYLVLSCLDSLAVYVMQIGSTGGADSENRSSDSEGEGCDTSKRIQNVAEFKLSSGILSFSIVNASMRRVKNSIESYYPIEEPDDFDDDSNSTSALVLHMFVVQAKSLQECQIIYQPCVAEKTERSSLNSKRSQTPEDNLLIKEEPESPNSGTVGAVQLDALFAKSAKRASTGSSSAMVAVAAAAAAAPSAILQDATKEAAKSESPQLSSAYTQQVNLMTPDAFSASGTAAAAAVFVSTSTTTSIGTDSSTTTSGQDRSIDSAVLQTIRMLATVTSKTSENPNAEVLLNLMNNTLIEDREQQKLKEKLDARKKFIAIDRNPERNVAENLASGSSSPSREVQEIMATQDDADAYEAELENLDDDDDDEEEELANSSPLPEAVDGTWPIVKLSSHSAELQNAAQIMSQAVQNTNNGNVPPTLGGGHNNNTSVGSNSNNNTATTLSTSNTSSSNNAGGTCVDSSGTGELNAKMELLIDLVKAQSKQINKLENEVNKLQKQQEAAAALHSKQDTSLEPKNLSQLAYKIEMQLSKLMEQYLKRYENEHKKKLTEFLAARESQNRELRDSVLQVLNQYVMNHFTDIIGNVLNMELQRQLLPRVNANMDQLQAQMQVEIVQKLSVFDKTVKENIAQVCKSKQFLDTFGKSVLIGVQTSLQTAFIESMSSTLIPAYEKSSQNMFKQLHDAFSVGIKDFMVQFNTYLQHMPQPQAGSGNTEEINNKLSMLKQLVESSLHKHRTELTDAMLETQREVKSLEILLARQVQETIRAELRKHMEAQNVAMRSQAATPAPPYDLRDSIKQLLMAGQINKAFHQALLANDLGLVEFTLRHTDSNQAFAPEGCRLEQKVLLSLIQQISADMTNHNELKQRYLNEALLAINMADPITREHAPKVLTELYRNCQQFIKNSPKNSQFSNVRLLMKAIITYRDQLK</sequence>
<feature type="chain" id="PRO_0000372649" description="Enhancer of mRNA-decapping protein 4 homolog">
    <location>
        <begin position="1"/>
        <end position="1354"/>
    </location>
</feature>
<feature type="repeat" description="WD 1">
    <location>
        <begin position="309"/>
        <end position="348"/>
    </location>
</feature>
<feature type="repeat" description="WD 2">
    <location>
        <begin position="363"/>
        <end position="406"/>
    </location>
</feature>
<feature type="region of interest" description="Disordered" evidence="2">
    <location>
        <begin position="18"/>
        <end position="38"/>
    </location>
</feature>
<feature type="region of interest" description="Disordered" evidence="2">
    <location>
        <begin position="552"/>
        <end position="581"/>
    </location>
</feature>
<feature type="region of interest" description="Disordered" evidence="2">
    <location>
        <begin position="788"/>
        <end position="811"/>
    </location>
</feature>
<feature type="region of interest" description="Disordered" evidence="2">
    <location>
        <begin position="838"/>
        <end position="884"/>
    </location>
</feature>
<feature type="coiled-coil region" evidence="1">
    <location>
        <begin position="765"/>
        <end position="803"/>
    </location>
</feature>
<feature type="coiled-coil region" evidence="1">
    <location>
        <begin position="893"/>
        <end position="936"/>
    </location>
</feature>
<feature type="coiled-coil region" evidence="1">
    <location>
        <begin position="969"/>
        <end position="1036"/>
    </location>
</feature>
<feature type="coiled-coil region" evidence="1">
    <location>
        <begin position="1159"/>
        <end position="1188"/>
    </location>
</feature>
<feature type="compositionally biased region" description="Polar residues" evidence="2">
    <location>
        <begin position="554"/>
        <end position="565"/>
    </location>
</feature>
<feature type="compositionally biased region" description="Acidic residues" evidence="2">
    <location>
        <begin position="788"/>
        <end position="799"/>
    </location>
</feature>
<feature type="compositionally biased region" description="Low complexity" evidence="2">
    <location>
        <begin position="853"/>
        <end position="884"/>
    </location>
</feature>
<feature type="modified residue" description="Phosphoserine" evidence="5">
    <location>
        <position position="32"/>
    </location>
</feature>
<feature type="modified residue" description="Phosphoserine" evidence="5">
    <location>
        <position position="561"/>
    </location>
</feature>
<feature type="modified residue" description="Phosphothreonine" evidence="5">
    <location>
        <position position="563"/>
    </location>
</feature>
<feature type="modified residue" description="Phosphoserine" evidence="3 5">
    <location>
        <position position="576"/>
    </location>
</feature>
<feature type="modified residue" description="Phosphothreonine" evidence="3">
    <location>
        <position position="581"/>
    </location>
</feature>
<feature type="modified residue" description="Phosphoserine" evidence="5">
    <location>
        <position position="759"/>
    </location>
</feature>
<feature type="modified residue" description="Phosphoserine" evidence="5">
    <location>
        <position position="762"/>
    </location>
</feature>
<feature type="modified residue" description="Phosphoserine" evidence="5">
    <location>
        <position position="763"/>
    </location>
</feature>
<feature type="modified residue" description="Phosphoserine" evidence="5">
    <location>
        <position position="1207"/>
    </location>
</feature>
<feature type="modified residue" description="Phosphothreonine" evidence="5">
    <location>
        <position position="1211"/>
    </location>
</feature>
<feature type="modified residue" description="Phosphothreonine" evidence="5">
    <location>
        <position position="1317"/>
    </location>
</feature>
<feature type="modified residue" description="Phosphotyrosine" evidence="5">
    <location>
        <position position="1320"/>
    </location>
</feature>
<feature type="helix" evidence="9">
    <location>
        <begin position="1218"/>
        <end position="1228"/>
    </location>
</feature>
<feature type="helix" evidence="9">
    <location>
        <begin position="1231"/>
        <end position="1240"/>
    </location>
</feature>
<feature type="helix" evidence="9">
    <location>
        <begin position="1244"/>
        <end position="1253"/>
    </location>
</feature>
<feature type="helix" evidence="9">
    <location>
        <begin position="1256"/>
        <end position="1259"/>
    </location>
</feature>
<feature type="helix" evidence="9">
    <location>
        <begin position="1269"/>
        <end position="1281"/>
    </location>
</feature>
<feature type="helix" evidence="9">
    <location>
        <begin position="1288"/>
        <end position="1300"/>
    </location>
</feature>
<feature type="helix" evidence="9">
    <location>
        <begin position="1306"/>
        <end position="1329"/>
    </location>
</feature>
<feature type="helix" evidence="9">
    <location>
        <begin position="1336"/>
        <end position="1349"/>
    </location>
</feature>
<keyword id="KW-0002">3D-structure</keyword>
<keyword id="KW-0175">Coiled coil</keyword>
<keyword id="KW-0963">Cytoplasm</keyword>
<keyword id="KW-0597">Phosphoprotein</keyword>
<keyword id="KW-1185">Reference proteome</keyword>
<keyword id="KW-0677">Repeat</keyword>
<keyword id="KW-0853">WD repeat</keyword>
<name>EDC4_DROME</name>
<organism>
    <name type="scientific">Drosophila melanogaster</name>
    <name type="common">Fruit fly</name>
    <dbReference type="NCBI Taxonomy" id="7227"/>
    <lineage>
        <taxon>Eukaryota</taxon>
        <taxon>Metazoa</taxon>
        <taxon>Ecdysozoa</taxon>
        <taxon>Arthropoda</taxon>
        <taxon>Hexapoda</taxon>
        <taxon>Insecta</taxon>
        <taxon>Pterygota</taxon>
        <taxon>Neoptera</taxon>
        <taxon>Endopterygota</taxon>
        <taxon>Diptera</taxon>
        <taxon>Brachycera</taxon>
        <taxon>Muscomorpha</taxon>
        <taxon>Ephydroidea</taxon>
        <taxon>Drosophilidae</taxon>
        <taxon>Drosophila</taxon>
        <taxon>Sophophora</taxon>
    </lineage>
</organism>